<keyword id="KW-0687">Ribonucleoprotein</keyword>
<keyword id="KW-0689">Ribosomal protein</keyword>
<keyword id="KW-0694">RNA-binding</keyword>
<keyword id="KW-0699">rRNA-binding</keyword>
<evidence type="ECO:0000255" key="1">
    <source>
        <dbReference type="HAMAP-Rule" id="MF_01337"/>
    </source>
</evidence>
<evidence type="ECO:0000305" key="2"/>
<feature type="chain" id="PRO_0000131326" description="Large ribosomal subunit protein uL18">
    <location>
        <begin position="1"/>
        <end position="119"/>
    </location>
</feature>
<dbReference type="EMBL" id="BA000012">
    <property type="protein sequence ID" value="BAB47922.1"/>
    <property type="molecule type" value="Genomic_DNA"/>
</dbReference>
<dbReference type="RefSeq" id="WP_010909284.1">
    <property type="nucleotide sequence ID" value="NC_002678.2"/>
</dbReference>
<dbReference type="SMR" id="Q98N41"/>
<dbReference type="GeneID" id="66684200"/>
<dbReference type="KEGG" id="mlo:mlr0313"/>
<dbReference type="eggNOG" id="COG0256">
    <property type="taxonomic scope" value="Bacteria"/>
</dbReference>
<dbReference type="HOGENOM" id="CLU_098841_0_1_5"/>
<dbReference type="Proteomes" id="UP000000552">
    <property type="component" value="Chromosome"/>
</dbReference>
<dbReference type="GO" id="GO:0022625">
    <property type="term" value="C:cytosolic large ribosomal subunit"/>
    <property type="evidence" value="ECO:0007669"/>
    <property type="project" value="TreeGrafter"/>
</dbReference>
<dbReference type="GO" id="GO:0008097">
    <property type="term" value="F:5S rRNA binding"/>
    <property type="evidence" value="ECO:0007669"/>
    <property type="project" value="TreeGrafter"/>
</dbReference>
<dbReference type="GO" id="GO:0003735">
    <property type="term" value="F:structural constituent of ribosome"/>
    <property type="evidence" value="ECO:0007669"/>
    <property type="project" value="InterPro"/>
</dbReference>
<dbReference type="GO" id="GO:0006412">
    <property type="term" value="P:translation"/>
    <property type="evidence" value="ECO:0007669"/>
    <property type="project" value="UniProtKB-UniRule"/>
</dbReference>
<dbReference type="CDD" id="cd00432">
    <property type="entry name" value="Ribosomal_L18_L5e"/>
    <property type="match status" value="1"/>
</dbReference>
<dbReference type="FunFam" id="3.30.420.100:FF:000001">
    <property type="entry name" value="50S ribosomal protein L18"/>
    <property type="match status" value="1"/>
</dbReference>
<dbReference type="Gene3D" id="3.30.420.100">
    <property type="match status" value="1"/>
</dbReference>
<dbReference type="HAMAP" id="MF_01337_B">
    <property type="entry name" value="Ribosomal_uL18_B"/>
    <property type="match status" value="1"/>
</dbReference>
<dbReference type="InterPro" id="IPR004389">
    <property type="entry name" value="Ribosomal_uL18_bac-type"/>
</dbReference>
<dbReference type="InterPro" id="IPR005484">
    <property type="entry name" value="Ribosomal_uL18_bac/euk"/>
</dbReference>
<dbReference type="NCBIfam" id="TIGR00060">
    <property type="entry name" value="L18_bact"/>
    <property type="match status" value="1"/>
</dbReference>
<dbReference type="PANTHER" id="PTHR12899">
    <property type="entry name" value="39S RIBOSOMAL PROTEIN L18, MITOCHONDRIAL"/>
    <property type="match status" value="1"/>
</dbReference>
<dbReference type="PANTHER" id="PTHR12899:SF3">
    <property type="entry name" value="LARGE RIBOSOMAL SUBUNIT PROTEIN UL18M"/>
    <property type="match status" value="1"/>
</dbReference>
<dbReference type="Pfam" id="PF00861">
    <property type="entry name" value="Ribosomal_L18p"/>
    <property type="match status" value="1"/>
</dbReference>
<dbReference type="SUPFAM" id="SSF53137">
    <property type="entry name" value="Translational machinery components"/>
    <property type="match status" value="1"/>
</dbReference>
<gene>
    <name evidence="1" type="primary">rplR</name>
    <name type="ordered locus">mlr0313</name>
</gene>
<proteinExistence type="inferred from homology"/>
<name>RL18_RHILO</name>
<sequence length="119" mass="12871">MGTKESTQRRAQRVRRQIRKVAGERPRLSVHRTSKNIYVQVIDDAKGHTIAAASTLEKDLKGSLKTGADTAAAAAIGKLIAERATKAGVKEVVFDRGPYIYHGRVKALAEAAREGGLSF</sequence>
<protein>
    <recommendedName>
        <fullName evidence="1">Large ribosomal subunit protein uL18</fullName>
    </recommendedName>
    <alternativeName>
        <fullName evidence="2">50S ribosomal protein L18</fullName>
    </alternativeName>
</protein>
<accession>Q98N41</accession>
<reference key="1">
    <citation type="journal article" date="2000" name="DNA Res.">
        <title>Complete genome structure of the nitrogen-fixing symbiotic bacterium Mesorhizobium loti.</title>
        <authorList>
            <person name="Kaneko T."/>
            <person name="Nakamura Y."/>
            <person name="Sato S."/>
            <person name="Asamizu E."/>
            <person name="Kato T."/>
            <person name="Sasamoto S."/>
            <person name="Watanabe A."/>
            <person name="Idesawa K."/>
            <person name="Ishikawa A."/>
            <person name="Kawashima K."/>
            <person name="Kimura T."/>
            <person name="Kishida Y."/>
            <person name="Kiyokawa C."/>
            <person name="Kohara M."/>
            <person name="Matsumoto M."/>
            <person name="Matsuno A."/>
            <person name="Mochizuki Y."/>
            <person name="Nakayama S."/>
            <person name="Nakazaki N."/>
            <person name="Shimpo S."/>
            <person name="Sugimoto M."/>
            <person name="Takeuchi C."/>
            <person name="Yamada M."/>
            <person name="Tabata S."/>
        </authorList>
    </citation>
    <scope>NUCLEOTIDE SEQUENCE [LARGE SCALE GENOMIC DNA]</scope>
    <source>
        <strain>LMG 29417 / CECT 9101 / MAFF 303099</strain>
    </source>
</reference>
<organism>
    <name type="scientific">Mesorhizobium japonicum (strain LMG 29417 / CECT 9101 / MAFF 303099)</name>
    <name type="common">Mesorhizobium loti (strain MAFF 303099)</name>
    <dbReference type="NCBI Taxonomy" id="266835"/>
    <lineage>
        <taxon>Bacteria</taxon>
        <taxon>Pseudomonadati</taxon>
        <taxon>Pseudomonadota</taxon>
        <taxon>Alphaproteobacteria</taxon>
        <taxon>Hyphomicrobiales</taxon>
        <taxon>Phyllobacteriaceae</taxon>
        <taxon>Mesorhizobium</taxon>
    </lineage>
</organism>
<comment type="function">
    <text evidence="1">This is one of the proteins that bind and probably mediate the attachment of the 5S RNA into the large ribosomal subunit, where it forms part of the central protuberance.</text>
</comment>
<comment type="subunit">
    <text evidence="1">Part of the 50S ribosomal subunit; part of the 5S rRNA/L5/L18/L25 subcomplex. Contacts the 5S and 23S rRNAs.</text>
</comment>
<comment type="similarity">
    <text evidence="1">Belongs to the universal ribosomal protein uL18 family.</text>
</comment>